<comment type="similarity">
    <text evidence="1">Belongs to the UPF0325 family.</text>
</comment>
<protein>
    <recommendedName>
        <fullName evidence="1">UPF0325 protein YPO1040/y3141/YP_2811</fullName>
    </recommendedName>
</protein>
<gene>
    <name type="ordered locus">YPO1040</name>
    <name type="ordered locus">y3141</name>
    <name type="ordered locus">YP_2811</name>
</gene>
<name>Y1040_YERPE</name>
<feature type="chain" id="PRO_0000211851" description="UPF0325 protein YPO1040/y3141/YP_2811">
    <location>
        <begin position="1"/>
        <end position="129"/>
    </location>
</feature>
<sequence>MYDNLKSLGITQPEDVDRYSLRQEANNDILKIYFRKDKGEFFAKSVKFKYPRQRKTVVSDNASHGYKEINEINPNLRYVIDELDQLCKRDQIEVDLKRKILDDLRHLESVVTNKIAEIEADLEKLTNGR</sequence>
<dbReference type="EMBL" id="AL590842">
    <property type="protein sequence ID" value="CAL19705.1"/>
    <property type="molecule type" value="Genomic_DNA"/>
</dbReference>
<dbReference type="EMBL" id="AE009952">
    <property type="protein sequence ID" value="AAM86691.1"/>
    <property type="molecule type" value="Genomic_DNA"/>
</dbReference>
<dbReference type="EMBL" id="AE017042">
    <property type="protein sequence ID" value="AAS62995.1"/>
    <property type="molecule type" value="Genomic_DNA"/>
</dbReference>
<dbReference type="PIR" id="AG0127">
    <property type="entry name" value="AG0127"/>
</dbReference>
<dbReference type="RefSeq" id="WP_002212127.1">
    <property type="nucleotide sequence ID" value="NZ_WUCM01000044.1"/>
</dbReference>
<dbReference type="RefSeq" id="YP_002346083.1">
    <property type="nucleotide sequence ID" value="NC_003143.1"/>
</dbReference>
<dbReference type="SMR" id="Q74S44"/>
<dbReference type="STRING" id="214092.YPO1040"/>
<dbReference type="PaxDb" id="214092-YPO1040"/>
<dbReference type="DNASU" id="1148088"/>
<dbReference type="EnsemblBacteria" id="AAS62995">
    <property type="protein sequence ID" value="AAS62995"/>
    <property type="gene ID" value="YP_2811"/>
</dbReference>
<dbReference type="KEGG" id="ype:YPO1040"/>
<dbReference type="KEGG" id="ypk:y3141"/>
<dbReference type="KEGG" id="ypm:YP_2811"/>
<dbReference type="PATRIC" id="fig|214092.21.peg.1328"/>
<dbReference type="eggNOG" id="ENOG502ZBV4">
    <property type="taxonomic scope" value="Bacteria"/>
</dbReference>
<dbReference type="HOGENOM" id="CLU_136774_0_0_6"/>
<dbReference type="OMA" id="QLCQRDQ"/>
<dbReference type="OrthoDB" id="5624524at2"/>
<dbReference type="Proteomes" id="UP000000815">
    <property type="component" value="Chromosome"/>
</dbReference>
<dbReference type="Proteomes" id="UP000001019">
    <property type="component" value="Chromosome"/>
</dbReference>
<dbReference type="Proteomes" id="UP000002490">
    <property type="component" value="Chromosome"/>
</dbReference>
<dbReference type="HAMAP" id="MF_01519">
    <property type="entry name" value="UPF0325"/>
    <property type="match status" value="1"/>
</dbReference>
<dbReference type="InterPro" id="IPR020911">
    <property type="entry name" value="UPF0325"/>
</dbReference>
<dbReference type="NCBIfam" id="NF010213">
    <property type="entry name" value="PRK13677.1"/>
    <property type="match status" value="1"/>
</dbReference>
<dbReference type="Pfam" id="PF11944">
    <property type="entry name" value="DUF3461"/>
    <property type="match status" value="1"/>
</dbReference>
<organism>
    <name type="scientific">Yersinia pestis</name>
    <dbReference type="NCBI Taxonomy" id="632"/>
    <lineage>
        <taxon>Bacteria</taxon>
        <taxon>Pseudomonadati</taxon>
        <taxon>Pseudomonadota</taxon>
        <taxon>Gammaproteobacteria</taxon>
        <taxon>Enterobacterales</taxon>
        <taxon>Yersiniaceae</taxon>
        <taxon>Yersinia</taxon>
    </lineage>
</organism>
<proteinExistence type="inferred from homology"/>
<accession>Q74S44</accession>
<accession>Q0WI05</accession>
<accession>Q7CH14</accession>
<accession>Q8ZH70</accession>
<keyword id="KW-1185">Reference proteome</keyword>
<reference key="1">
    <citation type="journal article" date="2001" name="Nature">
        <title>Genome sequence of Yersinia pestis, the causative agent of plague.</title>
        <authorList>
            <person name="Parkhill J."/>
            <person name="Wren B.W."/>
            <person name="Thomson N.R."/>
            <person name="Titball R.W."/>
            <person name="Holden M.T.G."/>
            <person name="Prentice M.B."/>
            <person name="Sebaihia M."/>
            <person name="James K.D."/>
            <person name="Churcher C.M."/>
            <person name="Mungall K.L."/>
            <person name="Baker S."/>
            <person name="Basham D."/>
            <person name="Bentley S.D."/>
            <person name="Brooks K."/>
            <person name="Cerdeno-Tarraga A.-M."/>
            <person name="Chillingworth T."/>
            <person name="Cronin A."/>
            <person name="Davies R.M."/>
            <person name="Davis P."/>
            <person name="Dougan G."/>
            <person name="Feltwell T."/>
            <person name="Hamlin N."/>
            <person name="Holroyd S."/>
            <person name="Jagels K."/>
            <person name="Karlyshev A.V."/>
            <person name="Leather S."/>
            <person name="Moule S."/>
            <person name="Oyston P.C.F."/>
            <person name="Quail M.A."/>
            <person name="Rutherford K.M."/>
            <person name="Simmonds M."/>
            <person name="Skelton J."/>
            <person name="Stevens K."/>
            <person name="Whitehead S."/>
            <person name="Barrell B.G."/>
        </authorList>
    </citation>
    <scope>NUCLEOTIDE SEQUENCE [LARGE SCALE GENOMIC DNA]</scope>
    <source>
        <strain>CO-92 / Biovar Orientalis</strain>
    </source>
</reference>
<reference key="2">
    <citation type="journal article" date="2002" name="J. Bacteriol.">
        <title>Genome sequence of Yersinia pestis KIM.</title>
        <authorList>
            <person name="Deng W."/>
            <person name="Burland V."/>
            <person name="Plunkett G. III"/>
            <person name="Boutin A."/>
            <person name="Mayhew G.F."/>
            <person name="Liss P."/>
            <person name="Perna N.T."/>
            <person name="Rose D.J."/>
            <person name="Mau B."/>
            <person name="Zhou S."/>
            <person name="Schwartz D.C."/>
            <person name="Fetherston J.D."/>
            <person name="Lindler L.E."/>
            <person name="Brubaker R.R."/>
            <person name="Plano G.V."/>
            <person name="Straley S.C."/>
            <person name="McDonough K.A."/>
            <person name="Nilles M.L."/>
            <person name="Matson J.S."/>
            <person name="Blattner F.R."/>
            <person name="Perry R.D."/>
        </authorList>
    </citation>
    <scope>NUCLEOTIDE SEQUENCE [LARGE SCALE GENOMIC DNA]</scope>
    <source>
        <strain>KIM10+ / Biovar Mediaevalis</strain>
    </source>
</reference>
<reference key="3">
    <citation type="journal article" date="2004" name="DNA Res.">
        <title>Complete genome sequence of Yersinia pestis strain 91001, an isolate avirulent to humans.</title>
        <authorList>
            <person name="Song Y."/>
            <person name="Tong Z."/>
            <person name="Wang J."/>
            <person name="Wang L."/>
            <person name="Guo Z."/>
            <person name="Han Y."/>
            <person name="Zhang J."/>
            <person name="Pei D."/>
            <person name="Zhou D."/>
            <person name="Qin H."/>
            <person name="Pang X."/>
            <person name="Han Y."/>
            <person name="Zhai J."/>
            <person name="Li M."/>
            <person name="Cui B."/>
            <person name="Qi Z."/>
            <person name="Jin L."/>
            <person name="Dai R."/>
            <person name="Chen F."/>
            <person name="Li S."/>
            <person name="Ye C."/>
            <person name="Du Z."/>
            <person name="Lin W."/>
            <person name="Wang J."/>
            <person name="Yu J."/>
            <person name="Yang H."/>
            <person name="Wang J."/>
            <person name="Huang P."/>
            <person name="Yang R."/>
        </authorList>
    </citation>
    <scope>NUCLEOTIDE SEQUENCE [LARGE SCALE GENOMIC DNA]</scope>
    <source>
        <strain>91001 / Biovar Mediaevalis</strain>
    </source>
</reference>
<evidence type="ECO:0000255" key="1">
    <source>
        <dbReference type="HAMAP-Rule" id="MF_01519"/>
    </source>
</evidence>